<evidence type="ECO:0000255" key="1">
    <source>
        <dbReference type="HAMAP-Rule" id="MF_01321"/>
    </source>
</evidence>
<evidence type="ECO:0000256" key="2">
    <source>
        <dbReference type="SAM" id="MobiDB-lite"/>
    </source>
</evidence>
<gene>
    <name evidence="1" type="primary">rpoB</name>
    <name type="ordered locus">SUB0115</name>
</gene>
<keyword id="KW-0240">DNA-directed RNA polymerase</keyword>
<keyword id="KW-0548">Nucleotidyltransferase</keyword>
<keyword id="KW-1185">Reference proteome</keyword>
<keyword id="KW-0804">Transcription</keyword>
<keyword id="KW-0808">Transferase</keyword>
<organism>
    <name type="scientific">Streptococcus uberis (strain ATCC BAA-854 / 0140J)</name>
    <dbReference type="NCBI Taxonomy" id="218495"/>
    <lineage>
        <taxon>Bacteria</taxon>
        <taxon>Bacillati</taxon>
        <taxon>Bacillota</taxon>
        <taxon>Bacilli</taxon>
        <taxon>Lactobacillales</taxon>
        <taxon>Streptococcaceae</taxon>
        <taxon>Streptococcus</taxon>
    </lineage>
</organism>
<dbReference type="EC" id="2.7.7.6" evidence="1"/>
<dbReference type="EMBL" id="AM946015">
    <property type="protein sequence ID" value="CAR40524.1"/>
    <property type="molecule type" value="Genomic_DNA"/>
</dbReference>
<dbReference type="RefSeq" id="WP_012657670.1">
    <property type="nucleotide sequence ID" value="NC_012004.1"/>
</dbReference>
<dbReference type="SMR" id="B9DSZ5"/>
<dbReference type="STRING" id="218495.SUB0115"/>
<dbReference type="GeneID" id="93825355"/>
<dbReference type="KEGG" id="sub:SUB0115"/>
<dbReference type="eggNOG" id="COG0085">
    <property type="taxonomic scope" value="Bacteria"/>
</dbReference>
<dbReference type="HOGENOM" id="CLU_000524_4_1_9"/>
<dbReference type="OrthoDB" id="9803954at2"/>
<dbReference type="Proteomes" id="UP000000449">
    <property type="component" value="Chromosome"/>
</dbReference>
<dbReference type="GO" id="GO:0000428">
    <property type="term" value="C:DNA-directed RNA polymerase complex"/>
    <property type="evidence" value="ECO:0007669"/>
    <property type="project" value="UniProtKB-KW"/>
</dbReference>
<dbReference type="GO" id="GO:0003677">
    <property type="term" value="F:DNA binding"/>
    <property type="evidence" value="ECO:0007669"/>
    <property type="project" value="UniProtKB-UniRule"/>
</dbReference>
<dbReference type="GO" id="GO:0003899">
    <property type="term" value="F:DNA-directed RNA polymerase activity"/>
    <property type="evidence" value="ECO:0007669"/>
    <property type="project" value="UniProtKB-UniRule"/>
</dbReference>
<dbReference type="GO" id="GO:0032549">
    <property type="term" value="F:ribonucleoside binding"/>
    <property type="evidence" value="ECO:0007669"/>
    <property type="project" value="InterPro"/>
</dbReference>
<dbReference type="GO" id="GO:0006351">
    <property type="term" value="P:DNA-templated transcription"/>
    <property type="evidence" value="ECO:0007669"/>
    <property type="project" value="UniProtKB-UniRule"/>
</dbReference>
<dbReference type="CDD" id="cd00653">
    <property type="entry name" value="RNA_pol_B_RPB2"/>
    <property type="match status" value="1"/>
</dbReference>
<dbReference type="Gene3D" id="2.40.50.100">
    <property type="match status" value="1"/>
</dbReference>
<dbReference type="Gene3D" id="2.40.50.150">
    <property type="match status" value="1"/>
</dbReference>
<dbReference type="Gene3D" id="3.90.1100.10">
    <property type="match status" value="2"/>
</dbReference>
<dbReference type="Gene3D" id="2.30.150.10">
    <property type="entry name" value="DNA-directed RNA polymerase, beta subunit, external 1 domain"/>
    <property type="match status" value="1"/>
</dbReference>
<dbReference type="Gene3D" id="2.40.270.10">
    <property type="entry name" value="DNA-directed RNA polymerase, subunit 2, domain 6"/>
    <property type="match status" value="1"/>
</dbReference>
<dbReference type="Gene3D" id="3.90.1800.10">
    <property type="entry name" value="RNA polymerase alpha subunit dimerisation domain"/>
    <property type="match status" value="1"/>
</dbReference>
<dbReference type="Gene3D" id="3.90.1110.10">
    <property type="entry name" value="RNA polymerase Rpb2, domain 2"/>
    <property type="match status" value="2"/>
</dbReference>
<dbReference type="HAMAP" id="MF_01321">
    <property type="entry name" value="RNApol_bact_RpoB"/>
    <property type="match status" value="1"/>
</dbReference>
<dbReference type="InterPro" id="IPR042107">
    <property type="entry name" value="DNA-dir_RNA_pol_bsu_ext_1_sf"/>
</dbReference>
<dbReference type="InterPro" id="IPR019462">
    <property type="entry name" value="DNA-dir_RNA_pol_bsu_external_1"/>
</dbReference>
<dbReference type="InterPro" id="IPR015712">
    <property type="entry name" value="DNA-dir_RNA_pol_su2"/>
</dbReference>
<dbReference type="InterPro" id="IPR007120">
    <property type="entry name" value="DNA-dir_RNAP_su2_dom"/>
</dbReference>
<dbReference type="InterPro" id="IPR037033">
    <property type="entry name" value="DNA-dir_RNAP_su2_hyb_sf"/>
</dbReference>
<dbReference type="InterPro" id="IPR010243">
    <property type="entry name" value="RNA_pol_bsu_bac"/>
</dbReference>
<dbReference type="InterPro" id="IPR007121">
    <property type="entry name" value="RNA_pol_bsu_CS"/>
</dbReference>
<dbReference type="InterPro" id="IPR007644">
    <property type="entry name" value="RNA_pol_bsu_protrusion"/>
</dbReference>
<dbReference type="InterPro" id="IPR007642">
    <property type="entry name" value="RNA_pol_Rpb2_2"/>
</dbReference>
<dbReference type="InterPro" id="IPR037034">
    <property type="entry name" value="RNA_pol_Rpb2_2_sf"/>
</dbReference>
<dbReference type="InterPro" id="IPR007645">
    <property type="entry name" value="RNA_pol_Rpb2_3"/>
</dbReference>
<dbReference type="InterPro" id="IPR007641">
    <property type="entry name" value="RNA_pol_Rpb2_7"/>
</dbReference>
<dbReference type="InterPro" id="IPR014724">
    <property type="entry name" value="RNA_pol_RPB2_OB-fold"/>
</dbReference>
<dbReference type="NCBIfam" id="NF001616">
    <property type="entry name" value="PRK00405.1"/>
    <property type="match status" value="1"/>
</dbReference>
<dbReference type="NCBIfam" id="TIGR02013">
    <property type="entry name" value="rpoB"/>
    <property type="match status" value="1"/>
</dbReference>
<dbReference type="PANTHER" id="PTHR20856">
    <property type="entry name" value="DNA-DIRECTED RNA POLYMERASE I SUBUNIT 2"/>
    <property type="match status" value="1"/>
</dbReference>
<dbReference type="Pfam" id="PF04563">
    <property type="entry name" value="RNA_pol_Rpb2_1"/>
    <property type="match status" value="1"/>
</dbReference>
<dbReference type="Pfam" id="PF04561">
    <property type="entry name" value="RNA_pol_Rpb2_2"/>
    <property type="match status" value="2"/>
</dbReference>
<dbReference type="Pfam" id="PF04565">
    <property type="entry name" value="RNA_pol_Rpb2_3"/>
    <property type="match status" value="1"/>
</dbReference>
<dbReference type="Pfam" id="PF10385">
    <property type="entry name" value="RNA_pol_Rpb2_45"/>
    <property type="match status" value="1"/>
</dbReference>
<dbReference type="Pfam" id="PF00562">
    <property type="entry name" value="RNA_pol_Rpb2_6"/>
    <property type="match status" value="1"/>
</dbReference>
<dbReference type="Pfam" id="PF04560">
    <property type="entry name" value="RNA_pol_Rpb2_7"/>
    <property type="match status" value="1"/>
</dbReference>
<dbReference type="SUPFAM" id="SSF64484">
    <property type="entry name" value="beta and beta-prime subunits of DNA dependent RNA-polymerase"/>
    <property type="match status" value="1"/>
</dbReference>
<dbReference type="PROSITE" id="PS01166">
    <property type="entry name" value="RNA_POL_BETA"/>
    <property type="match status" value="1"/>
</dbReference>
<name>RPOB_STRU0</name>
<accession>B9DSZ5</accession>
<feature type="chain" id="PRO_1000165826" description="DNA-directed RNA polymerase subunit beta">
    <location>
        <begin position="1"/>
        <end position="1188"/>
    </location>
</feature>
<feature type="region of interest" description="Disordered" evidence="2">
    <location>
        <begin position="1149"/>
        <end position="1188"/>
    </location>
</feature>
<feature type="compositionally biased region" description="Basic and acidic residues" evidence="2">
    <location>
        <begin position="1161"/>
        <end position="1175"/>
    </location>
</feature>
<sequence>MAGHEVRYGKHRTRRSFSRINEVLDLPNLIEIQTDSFQDFLDTGLREVFEDVLPISNFTDTMELEFVGYEFKEPKYTLEEARIHDASYSAPIFVTFRLVNKETGEIKTQEVFFGDFPIMTEMGTFIINGGERIIVSQLVRSPGVYFNDKVDKNGKVGYGSTVIPNRGAWLELETDAKDIAYTRIDRTRKIPFTTLVRALGFSGDDEILDIFGDSELVRNTIEKDIHKNPSDSRTDEALKEIYERLRPGEPKTADSSRSLLIARFFDARRYDLAAVGRYKINKKLNVKTRLLNQIIAENLVDSETGEILVEAGTEMTRDVIESIEAHIDGDLNKFVYTPNDYAVVTEPVVLQKFKVQSPLDPDKVVTIVGNATPDDKVRALTPADILAEMSYFLNLSEGIGKVDDIDHLGNRRIRAVGELLANQFRIGLARMERNVRERMSVQDNDVLTPQQIINIRPVTAAVKEFFGSSQLSQFMDQHNPLSELSHKRRLSALGPGGLTRDRAGYEVRDVHYTHYGRMCPIETPEGPNIGLINNLSSFGHLNKYGFIQTPYRKVDRATGVVTNEIVWLTADEEDEFTVAQANSKLNEDGTFAEEIVMGRHQGNNQEFAASTVDFVDVSPKQVVAVATACIPFLENDDSNRALMGANMQRQAVPLIDPKAPFVGTGMEYQAAHDSGAAVIAQHDGKVVFSDAEKVEVRREDGSLDVYHVTKFRRSNSGTAYNQRTLVKVGDIVEKGDFIADGPSMEKGEMALGQNPVVAYMTWEGYNFEDAVIMSERLVKEDVYTSVHLEEFESETRDTKLGPEEITREVPNVGEEALRDLDEMGIIRIGAEVKEGDILVGKVTPKGEKDLSAEERLLHAIFGDKSREVRDTSLRVPHGGDGIVRDVKIFTRANGDELQSGVNMLVRVYIAQKRKIKVGDKMAGRHGNKGVVSRIVPVEDMPYLPDGTPVDIMLNPLGVPSRMNIGQVMELHLGMAARNLGIHIATPVFDGATAEDLWDTVAEAGMDSDAKTILYDGRTGEPFDNRVSVGVMYMIKLHHMVDDKLHARSVGPYSLVTQQPLGGKAQFGGQRFGEMEVWALEAYGASNVLQEILTYKSDDVTGRLKAYEAITKGKPIPKPGVPESFRVLVKELQSLGLDMRVLDEDDNEVELRDLDEGEDDDVMHVDDLEKAREKQAQETPEVSENSEEK</sequence>
<comment type="function">
    <text evidence="1">DNA-dependent RNA polymerase catalyzes the transcription of DNA into RNA using the four ribonucleoside triphosphates as substrates.</text>
</comment>
<comment type="catalytic activity">
    <reaction evidence="1">
        <text>RNA(n) + a ribonucleoside 5'-triphosphate = RNA(n+1) + diphosphate</text>
        <dbReference type="Rhea" id="RHEA:21248"/>
        <dbReference type="Rhea" id="RHEA-COMP:14527"/>
        <dbReference type="Rhea" id="RHEA-COMP:17342"/>
        <dbReference type="ChEBI" id="CHEBI:33019"/>
        <dbReference type="ChEBI" id="CHEBI:61557"/>
        <dbReference type="ChEBI" id="CHEBI:140395"/>
        <dbReference type="EC" id="2.7.7.6"/>
    </reaction>
</comment>
<comment type="subunit">
    <text evidence="1">The RNAP catalytic core consists of 2 alpha, 1 beta, 1 beta' and 1 omega subunit. When a sigma factor is associated with the core the holoenzyme is formed, which can initiate transcription.</text>
</comment>
<comment type="similarity">
    <text evidence="1">Belongs to the RNA polymerase beta chain family.</text>
</comment>
<protein>
    <recommendedName>
        <fullName evidence="1">DNA-directed RNA polymerase subunit beta</fullName>
        <shortName evidence="1">RNAP subunit beta</shortName>
        <ecNumber evidence="1">2.7.7.6</ecNumber>
    </recommendedName>
    <alternativeName>
        <fullName evidence="1">RNA polymerase subunit beta</fullName>
    </alternativeName>
    <alternativeName>
        <fullName evidence="1">Transcriptase subunit beta</fullName>
    </alternativeName>
</protein>
<reference key="1">
    <citation type="journal article" date="2009" name="BMC Genomics">
        <title>Evidence for niche adaptation in the genome of the bovine pathogen Streptococcus uberis.</title>
        <authorList>
            <person name="Ward P.N."/>
            <person name="Holden M.T.G."/>
            <person name="Leigh J.A."/>
            <person name="Lennard N."/>
            <person name="Bignell A."/>
            <person name="Barron A."/>
            <person name="Clark L."/>
            <person name="Quail M.A."/>
            <person name="Woodward J."/>
            <person name="Barrell B.G."/>
            <person name="Egan S.A."/>
            <person name="Field T.R."/>
            <person name="Maskell D."/>
            <person name="Kehoe M."/>
            <person name="Dowson C.G."/>
            <person name="Chanter N."/>
            <person name="Whatmore A.M."/>
            <person name="Bentley S.D."/>
            <person name="Parkhill J."/>
        </authorList>
    </citation>
    <scope>NUCLEOTIDE SEQUENCE [LARGE SCALE GENOMIC DNA]</scope>
    <source>
        <strain>ATCC BAA-854 / 0140J</strain>
    </source>
</reference>
<proteinExistence type="inferred from homology"/>